<organism>
    <name type="scientific">Mycolicibacterium smegmatis</name>
    <name type="common">Mycobacterium smegmatis</name>
    <dbReference type="NCBI Taxonomy" id="1772"/>
    <lineage>
        <taxon>Bacteria</taxon>
        <taxon>Bacillati</taxon>
        <taxon>Actinomycetota</taxon>
        <taxon>Actinomycetes</taxon>
        <taxon>Mycobacteriales</taxon>
        <taxon>Mycobacteriaceae</taxon>
        <taxon>Mycolicibacterium</taxon>
    </lineage>
</organism>
<dbReference type="EMBL" id="AF164439">
    <property type="protein sequence ID" value="AAD47079.1"/>
    <property type="molecule type" value="Genomic_DNA"/>
</dbReference>
<dbReference type="RefSeq" id="WP_003893222.1">
    <property type="nucleotide sequence ID" value="NZ_UGQO01000001.1"/>
</dbReference>
<dbReference type="SMR" id="Q9S426"/>
<dbReference type="KEGG" id="msh:LI98_09130"/>
<dbReference type="KEGG" id="msn:LI99_09130"/>
<dbReference type="OMA" id="CQGCEVR"/>
<dbReference type="GO" id="GO:0005737">
    <property type="term" value="C:cytoplasm"/>
    <property type="evidence" value="ECO:0007669"/>
    <property type="project" value="UniProtKB-SubCell"/>
</dbReference>
<dbReference type="GO" id="GO:0051539">
    <property type="term" value="F:4 iron, 4 sulfur cluster binding"/>
    <property type="evidence" value="ECO:0007669"/>
    <property type="project" value="UniProtKB-UniRule"/>
</dbReference>
<dbReference type="GO" id="GO:0035731">
    <property type="term" value="F:dinitrosyl-iron complex binding"/>
    <property type="evidence" value="ECO:0007669"/>
    <property type="project" value="UniProtKB-UniRule"/>
</dbReference>
<dbReference type="GO" id="GO:0003677">
    <property type="term" value="F:DNA binding"/>
    <property type="evidence" value="ECO:0007669"/>
    <property type="project" value="UniProtKB-UniRule"/>
</dbReference>
<dbReference type="GO" id="GO:0046872">
    <property type="term" value="F:metal ion binding"/>
    <property type="evidence" value="ECO:0007669"/>
    <property type="project" value="UniProtKB-KW"/>
</dbReference>
<dbReference type="GO" id="GO:0047134">
    <property type="term" value="F:protein-disulfide reductase [NAD(P)H] activity"/>
    <property type="evidence" value="ECO:0007669"/>
    <property type="project" value="TreeGrafter"/>
</dbReference>
<dbReference type="GO" id="GO:0045454">
    <property type="term" value="P:cell redox homeostasis"/>
    <property type="evidence" value="ECO:0007669"/>
    <property type="project" value="TreeGrafter"/>
</dbReference>
<dbReference type="GO" id="GO:0045892">
    <property type="term" value="P:negative regulation of DNA-templated transcription"/>
    <property type="evidence" value="ECO:0007669"/>
    <property type="project" value="TreeGrafter"/>
</dbReference>
<dbReference type="HAMAP" id="MF_01479">
    <property type="entry name" value="WhiB"/>
    <property type="match status" value="1"/>
</dbReference>
<dbReference type="InterPro" id="IPR034768">
    <property type="entry name" value="4FE4S_WBL"/>
</dbReference>
<dbReference type="InterPro" id="IPR003482">
    <property type="entry name" value="Whib"/>
</dbReference>
<dbReference type="PANTHER" id="PTHR38839:SF4">
    <property type="entry name" value="TRANSCRIPTIONAL REGULATOR WHIB"/>
    <property type="match status" value="1"/>
</dbReference>
<dbReference type="PANTHER" id="PTHR38839">
    <property type="entry name" value="TRANSCRIPTIONAL REGULATOR WHID-RELATED"/>
    <property type="match status" value="1"/>
</dbReference>
<dbReference type="Pfam" id="PF02467">
    <property type="entry name" value="Whib"/>
    <property type="match status" value="1"/>
</dbReference>
<dbReference type="PROSITE" id="PS51674">
    <property type="entry name" value="4FE4S_WBL"/>
    <property type="match status" value="1"/>
</dbReference>
<protein>
    <recommendedName>
        <fullName>Transcriptional regulator WhiB2</fullName>
    </recommendedName>
</protein>
<comment type="function">
    <text evidence="1 3 5">Acts as a transcriptional regulator. Probably redox-responsive. The apo- but not holo-form probably binds DNA (By similarity). Affects the localization or efficiency of septum formation. Complemented by whiB2 of M.tuberculosis and whiB of S.coelicolor.</text>
</comment>
<comment type="cofactor">
    <cofactor evidence="1 6">
        <name>[4Fe-4S] cluster</name>
        <dbReference type="ChEBI" id="CHEBI:49883"/>
    </cofactor>
    <text evidence="1 6">Binds 1 [4Fe-4S] cluster per subunit. Following nitrosylation of the [4Fe-4S] cluster binds 1 [4Fe-8(NO)] cluster per subunit.</text>
</comment>
<comment type="subunit">
    <text evidence="5">Oligomeric in native gel electrophoresis.</text>
</comment>
<comment type="subcellular location">
    <subcellularLocation>
        <location evidence="4">Cytoplasm</location>
    </subcellularLocation>
</comment>
<comment type="induction">
    <text evidence="4">In exponential phase (at protein level).</text>
</comment>
<comment type="PTM">
    <text evidence="1">The Fe-S cluster can be nitrosylated by nitric oxide (NO).</text>
</comment>
<comment type="PTM">
    <text evidence="1">Upon Fe-S cluster removal intramolecular disulfide bonds are formed.</text>
</comment>
<comment type="disruption phenotype">
    <text evidence="3 4">Essential. In depletion experiments, individual cells are elongated and/or filamented, with diminished septum formation and aberrant septal placement. The septa that do form may be immature as cytokinesis does not occur. Has no effect on FtsZ accumulation. Cells are less viable, colonies are smaller and the mutant is non-acid-fast under conditions of acetamide withdrawal.</text>
</comment>
<comment type="miscellaneous">
    <text>In this protein one of the ligands for the Fe-S cluster may be provided by Asp-71 rather than Cys-67.</text>
</comment>
<comment type="similarity">
    <text evidence="6">Belongs to the WhiB family.</text>
</comment>
<gene>
    <name type="primary">whmD</name>
    <name type="synonym">whiB2</name>
</gene>
<keyword id="KW-0004">4Fe-4S</keyword>
<keyword id="KW-0963">Cytoplasm</keyword>
<keyword id="KW-1015">Disulfide bond</keyword>
<keyword id="KW-0238">DNA-binding</keyword>
<keyword id="KW-0408">Iron</keyword>
<keyword id="KW-0411">Iron-sulfur</keyword>
<keyword id="KW-0479">Metal-binding</keyword>
<keyword id="KW-0804">Transcription</keyword>
<keyword id="KW-0805">Transcription regulation</keyword>
<accession>Q9S426</accession>
<feature type="chain" id="PRO_0000420396" description="Transcriptional regulator WhiB2">
    <location>
        <begin position="1"/>
        <end position="129"/>
    </location>
</feature>
<feature type="domain" description="4Fe-4S Wbl-type">
    <location>
        <begin position="66"/>
        <end position="123"/>
    </location>
</feature>
<feature type="region of interest" description="Disordered" evidence="2">
    <location>
        <begin position="23"/>
        <end position="45"/>
    </location>
</feature>
<feature type="binding site" evidence="1">
    <location>
        <position position="67"/>
    </location>
    <ligand>
        <name>[4Fe-4S] cluster</name>
        <dbReference type="ChEBI" id="CHEBI:49883"/>
    </ligand>
</feature>
<feature type="binding site" evidence="6">
    <location>
        <position position="90"/>
    </location>
    <ligand>
        <name>[4Fe-4S] cluster</name>
        <dbReference type="ChEBI" id="CHEBI:49883"/>
    </ligand>
</feature>
<feature type="binding site" evidence="6">
    <location>
        <position position="93"/>
    </location>
    <ligand>
        <name>[4Fe-4S] cluster</name>
        <dbReference type="ChEBI" id="CHEBI:49883"/>
    </ligand>
</feature>
<feature type="binding site" evidence="6">
    <location>
        <position position="99"/>
    </location>
    <ligand>
        <name>[4Fe-4S] cluster</name>
        <dbReference type="ChEBI" id="CHEBI:49883"/>
    </ligand>
</feature>
<feature type="mutagenesis site" description="Not required to complement filamentous phenotype in depletion experiments." evidence="5">
    <original>C</original>
    <variation>A</variation>
    <location>
        <position position="67"/>
    </location>
</feature>
<feature type="mutagenesis site" description="Required to complement filamentous phenotype in depletion experiments." evidence="5">
    <original>D</original>
    <variation>A</variation>
    <location>
        <position position="71"/>
    </location>
</feature>
<feature type="mutagenesis site" description="Required to complement filamentous phenotype in depletion experiments." evidence="5">
    <original>C</original>
    <variation>A</variation>
    <location>
        <position position="90"/>
    </location>
</feature>
<feature type="mutagenesis site" description="Required to complement filamentous phenotype in depletion experiments." evidence="5">
    <original>C</original>
    <variation>A</variation>
    <location>
        <position position="93"/>
    </location>
</feature>
<feature type="mutagenesis site" description="Required to complement filamentous phenotype in depletion experiments." evidence="5">
    <original>C</original>
    <variation>A</variation>
    <location>
        <position position="99"/>
    </location>
</feature>
<feature type="mutagenesis site" description="Required to complement filamentous phenotype in depletion experiments." evidence="5">
    <original>G</original>
    <variation>P</variation>
    <location>
        <position position="111"/>
    </location>
</feature>
<feature type="mutagenesis site" description="Partial complementation of filamentous phenotype in depletion experiments." evidence="5">
    <original>L</original>
    <variation>P</variation>
    <location>
        <position position="116"/>
    </location>
</feature>
<evidence type="ECO:0000250" key="1"/>
<evidence type="ECO:0000256" key="2">
    <source>
        <dbReference type="SAM" id="MobiDB-lite"/>
    </source>
</evidence>
<evidence type="ECO:0000269" key="3">
    <source>
    </source>
</evidence>
<evidence type="ECO:0000269" key="4">
    <source>
    </source>
</evidence>
<evidence type="ECO:0000269" key="5">
    <source>
    </source>
</evidence>
<evidence type="ECO:0000305" key="6"/>
<name>WHIB2_MYCSM</name>
<reference key="1">
    <citation type="journal article" date="2000" name="Proc. Natl. Acad. Sci. U.S.A.">
        <title>whmD is an essential mycobacterial gene required for proper septation and cell division.</title>
        <authorList>
            <person name="Gomez J.E."/>
            <person name="Bishai W.R."/>
        </authorList>
    </citation>
    <scope>NUCLEOTIDE SEQUENCE [GENOMIC DNA]</scope>
    <scope>FUNCTION</scope>
    <scope>DISRUPTION PHENOTYPE</scope>
    <source>
        <strain>mc(2)6 1-2c</strain>
    </source>
</reference>
<reference key="2">
    <citation type="journal article" date="2006" name="Microbiology">
        <title>Mycobacterium smegmatis whmD and its homologue Mycobacterium tuberculosis whiB2 are functionally equivalent.</title>
        <authorList>
            <person name="Raghunand T.R."/>
            <person name="Bishai W.R."/>
        </authorList>
    </citation>
    <scope>SUBCELLULAR LOCATION</scope>
    <scope>INDUCTION</scope>
    <scope>DISRUPTION PHENOTYPE</scope>
    <source>
        <strain>mc(2)6 1-2c</strain>
    </source>
</reference>
<reference key="3">
    <citation type="journal article" date="2006" name="J. Bacteriol.">
        <title>Mapping essential domains of Mycobacterium smegmatis WhmD: insights into WhiB structure and function.</title>
        <authorList>
            <person name="Raghunand T.R."/>
            <person name="Bishai W.R."/>
        </authorList>
    </citation>
    <scope>FUNCTION</scope>
    <scope>COFACTOR</scope>
    <scope>SUBUNIT</scope>
    <scope>MUTAGENESIS OF CYS-67; ASP-71; CYS-90; CYS-93; CYS-99; GLY-111 AND LEU-116</scope>
    <source>
        <strain>mc(2)6 1-2c</strain>
    </source>
</reference>
<proteinExistence type="evidence at protein level"/>
<sequence>MSYESGDFDRVVRFDNRLLGSVSHAPHIDTGSTPTGAAGRPQLSLVPDSFDVAPEAEEDQWQERALCAQTDPEAFFPEKGGSTREAKRICQGCEVRDACLEYALAHDERFGIWGGLSERERRRLKRGII</sequence>